<feature type="initiator methionine" description="Removed" evidence="1">
    <location>
        <position position="1"/>
    </location>
</feature>
<feature type="chain" id="PRO_1000057697" description="Formamidopyrimidine-DNA glycosylase">
    <location>
        <begin position="2"/>
        <end position="269"/>
    </location>
</feature>
<feature type="zinc finger region" description="FPG-type" evidence="2">
    <location>
        <begin position="235"/>
        <end position="269"/>
    </location>
</feature>
<feature type="active site" description="Schiff-base intermediate with DNA" evidence="2">
    <location>
        <position position="2"/>
    </location>
</feature>
<feature type="active site" description="Proton donor" evidence="2">
    <location>
        <position position="3"/>
    </location>
</feature>
<feature type="active site" description="Proton donor; for beta-elimination activity" evidence="2">
    <location>
        <position position="57"/>
    </location>
</feature>
<feature type="active site" description="Proton donor; for delta-elimination activity" evidence="2">
    <location>
        <position position="259"/>
    </location>
</feature>
<feature type="binding site" evidence="2">
    <location>
        <position position="90"/>
    </location>
    <ligand>
        <name>DNA</name>
        <dbReference type="ChEBI" id="CHEBI:16991"/>
    </ligand>
</feature>
<feature type="binding site" evidence="2">
    <location>
        <position position="109"/>
    </location>
    <ligand>
        <name>DNA</name>
        <dbReference type="ChEBI" id="CHEBI:16991"/>
    </ligand>
</feature>
<feature type="binding site" evidence="2">
    <location>
        <position position="150"/>
    </location>
    <ligand>
        <name>DNA</name>
        <dbReference type="ChEBI" id="CHEBI:16991"/>
    </ligand>
</feature>
<reference key="1">
    <citation type="journal article" date="2007" name="PLoS Genet.">
        <title>The complete genome sequence of Yersinia pseudotuberculosis IP31758, the causative agent of Far East scarlet-like fever.</title>
        <authorList>
            <person name="Eppinger M."/>
            <person name="Rosovitz M.J."/>
            <person name="Fricke W.F."/>
            <person name="Rasko D.A."/>
            <person name="Kokorina G."/>
            <person name="Fayolle C."/>
            <person name="Lindler L.E."/>
            <person name="Carniel E."/>
            <person name="Ravel J."/>
        </authorList>
    </citation>
    <scope>NUCLEOTIDE SEQUENCE [LARGE SCALE GENOMIC DNA]</scope>
    <source>
        <strain>IP 31758</strain>
    </source>
</reference>
<accession>A7FCT7</accession>
<keyword id="KW-0227">DNA damage</keyword>
<keyword id="KW-0234">DNA repair</keyword>
<keyword id="KW-0238">DNA-binding</keyword>
<keyword id="KW-0326">Glycosidase</keyword>
<keyword id="KW-0378">Hydrolase</keyword>
<keyword id="KW-0456">Lyase</keyword>
<keyword id="KW-0479">Metal-binding</keyword>
<keyword id="KW-0511">Multifunctional enzyme</keyword>
<keyword id="KW-0862">Zinc</keyword>
<keyword id="KW-0863">Zinc-finger</keyword>
<sequence length="269" mass="30111">MPELPEVETSRRGIEPYLVGQTILYAVVRNARLRWPVSDEILTLSDQPVLSVQRRAKYLLLELPKGWIIIHLGMSGSLRVLSEETAAEKHDHVDLVVSNGKILRYTDPRRFGAWLWAKDLETSNVLAHLGPEPLSDEFTAQYLFDKSRNKRTLIKPWLMDNKVVVGVGNIYASESLFAAGILPDRAAGSLTDAESVLLVATIKAVLLHSIEQGGTTLRDFLQSDGKPGYFAQELQVYGRAGEPCRQCGHPIEIAKHGQRSTFFCRHCQH</sequence>
<gene>
    <name evidence="2" type="primary">mutM</name>
    <name evidence="2" type="synonym">fpg</name>
    <name type="ordered locus">YpsIP31758_0064</name>
</gene>
<name>FPG_YERP3</name>
<organism>
    <name type="scientific">Yersinia pseudotuberculosis serotype O:1b (strain IP 31758)</name>
    <dbReference type="NCBI Taxonomy" id="349747"/>
    <lineage>
        <taxon>Bacteria</taxon>
        <taxon>Pseudomonadati</taxon>
        <taxon>Pseudomonadota</taxon>
        <taxon>Gammaproteobacteria</taxon>
        <taxon>Enterobacterales</taxon>
        <taxon>Yersiniaceae</taxon>
        <taxon>Yersinia</taxon>
    </lineage>
</organism>
<proteinExistence type="inferred from homology"/>
<evidence type="ECO:0000250" key="1"/>
<evidence type="ECO:0000255" key="2">
    <source>
        <dbReference type="HAMAP-Rule" id="MF_00103"/>
    </source>
</evidence>
<comment type="function">
    <text evidence="2">Involved in base excision repair of DNA damaged by oxidation or by mutagenic agents. Acts as a DNA glycosylase that recognizes and removes damaged bases. Has a preference for oxidized purines, such as 7,8-dihydro-8-oxoguanine (8-oxoG). Has AP (apurinic/apyrimidinic) lyase activity and introduces nicks in the DNA strand. Cleaves the DNA backbone by beta-delta elimination to generate a single-strand break at the site of the removed base with both 3'- and 5'-phosphates.</text>
</comment>
<comment type="catalytic activity">
    <reaction evidence="2">
        <text>Hydrolysis of DNA containing ring-opened 7-methylguanine residues, releasing 2,6-diamino-4-hydroxy-5-(N-methyl)formamidopyrimidine.</text>
        <dbReference type="EC" id="3.2.2.23"/>
    </reaction>
</comment>
<comment type="catalytic activity">
    <reaction evidence="2">
        <text>2'-deoxyribonucleotide-(2'-deoxyribose 5'-phosphate)-2'-deoxyribonucleotide-DNA = a 3'-end 2'-deoxyribonucleotide-(2,3-dehydro-2,3-deoxyribose 5'-phosphate)-DNA + a 5'-end 5'-phospho-2'-deoxyribonucleoside-DNA + H(+)</text>
        <dbReference type="Rhea" id="RHEA:66592"/>
        <dbReference type="Rhea" id="RHEA-COMP:13180"/>
        <dbReference type="Rhea" id="RHEA-COMP:16897"/>
        <dbReference type="Rhea" id="RHEA-COMP:17067"/>
        <dbReference type="ChEBI" id="CHEBI:15378"/>
        <dbReference type="ChEBI" id="CHEBI:136412"/>
        <dbReference type="ChEBI" id="CHEBI:157695"/>
        <dbReference type="ChEBI" id="CHEBI:167181"/>
        <dbReference type="EC" id="4.2.99.18"/>
    </reaction>
</comment>
<comment type="cofactor">
    <cofactor evidence="2">
        <name>Zn(2+)</name>
        <dbReference type="ChEBI" id="CHEBI:29105"/>
    </cofactor>
    <text evidence="2">Binds 1 zinc ion per subunit.</text>
</comment>
<comment type="subunit">
    <text evidence="2">Monomer.</text>
</comment>
<comment type="similarity">
    <text evidence="2">Belongs to the FPG family.</text>
</comment>
<dbReference type="EC" id="3.2.2.23" evidence="2"/>
<dbReference type="EC" id="4.2.99.18" evidence="2"/>
<dbReference type="EMBL" id="CP000720">
    <property type="protein sequence ID" value="ABS47496.1"/>
    <property type="molecule type" value="Genomic_DNA"/>
</dbReference>
<dbReference type="RefSeq" id="WP_002208989.1">
    <property type="nucleotide sequence ID" value="NC_009708.1"/>
</dbReference>
<dbReference type="SMR" id="A7FCT7"/>
<dbReference type="GeneID" id="57974538"/>
<dbReference type="KEGG" id="ypi:YpsIP31758_0064"/>
<dbReference type="HOGENOM" id="CLU_038423_1_1_6"/>
<dbReference type="Proteomes" id="UP000002412">
    <property type="component" value="Chromosome"/>
</dbReference>
<dbReference type="GO" id="GO:0034039">
    <property type="term" value="F:8-oxo-7,8-dihydroguanine DNA N-glycosylase activity"/>
    <property type="evidence" value="ECO:0007669"/>
    <property type="project" value="TreeGrafter"/>
</dbReference>
<dbReference type="GO" id="GO:0140078">
    <property type="term" value="F:class I DNA-(apurinic or apyrimidinic site) endonuclease activity"/>
    <property type="evidence" value="ECO:0007669"/>
    <property type="project" value="UniProtKB-EC"/>
</dbReference>
<dbReference type="GO" id="GO:0003684">
    <property type="term" value="F:damaged DNA binding"/>
    <property type="evidence" value="ECO:0007669"/>
    <property type="project" value="InterPro"/>
</dbReference>
<dbReference type="GO" id="GO:0008270">
    <property type="term" value="F:zinc ion binding"/>
    <property type="evidence" value="ECO:0007669"/>
    <property type="project" value="UniProtKB-UniRule"/>
</dbReference>
<dbReference type="GO" id="GO:0006284">
    <property type="term" value="P:base-excision repair"/>
    <property type="evidence" value="ECO:0007669"/>
    <property type="project" value="InterPro"/>
</dbReference>
<dbReference type="CDD" id="cd08966">
    <property type="entry name" value="EcFpg-like_N"/>
    <property type="match status" value="1"/>
</dbReference>
<dbReference type="FunFam" id="1.10.8.50:FF:000003">
    <property type="entry name" value="Formamidopyrimidine-DNA glycosylase"/>
    <property type="match status" value="1"/>
</dbReference>
<dbReference type="FunFam" id="3.20.190.10:FF:000001">
    <property type="entry name" value="Formamidopyrimidine-DNA glycosylase"/>
    <property type="match status" value="1"/>
</dbReference>
<dbReference type="Gene3D" id="1.10.8.50">
    <property type="match status" value="1"/>
</dbReference>
<dbReference type="Gene3D" id="3.20.190.10">
    <property type="entry name" value="MutM-like, N-terminal"/>
    <property type="match status" value="1"/>
</dbReference>
<dbReference type="HAMAP" id="MF_00103">
    <property type="entry name" value="Fapy_DNA_glycosyl"/>
    <property type="match status" value="1"/>
</dbReference>
<dbReference type="InterPro" id="IPR015886">
    <property type="entry name" value="DNA_glyclase/AP_lyase_DNA-bd"/>
</dbReference>
<dbReference type="InterPro" id="IPR015887">
    <property type="entry name" value="DNA_glyclase_Znf_dom_DNA_BS"/>
</dbReference>
<dbReference type="InterPro" id="IPR020629">
    <property type="entry name" value="Formamido-pyr_DNA_Glyclase"/>
</dbReference>
<dbReference type="InterPro" id="IPR012319">
    <property type="entry name" value="FPG_cat"/>
</dbReference>
<dbReference type="InterPro" id="IPR035937">
    <property type="entry name" value="MutM-like_N-ter"/>
</dbReference>
<dbReference type="InterPro" id="IPR010979">
    <property type="entry name" value="Ribosomal_uS13-like_H2TH"/>
</dbReference>
<dbReference type="InterPro" id="IPR000214">
    <property type="entry name" value="Znf_DNA_glyclase/AP_lyase"/>
</dbReference>
<dbReference type="InterPro" id="IPR010663">
    <property type="entry name" value="Znf_FPG/IleRS"/>
</dbReference>
<dbReference type="NCBIfam" id="TIGR00577">
    <property type="entry name" value="fpg"/>
    <property type="match status" value="1"/>
</dbReference>
<dbReference type="NCBIfam" id="NF002211">
    <property type="entry name" value="PRK01103.1"/>
    <property type="match status" value="1"/>
</dbReference>
<dbReference type="PANTHER" id="PTHR22993">
    <property type="entry name" value="FORMAMIDOPYRIMIDINE-DNA GLYCOSYLASE"/>
    <property type="match status" value="1"/>
</dbReference>
<dbReference type="PANTHER" id="PTHR22993:SF9">
    <property type="entry name" value="FORMAMIDOPYRIMIDINE-DNA GLYCOSYLASE"/>
    <property type="match status" value="1"/>
</dbReference>
<dbReference type="Pfam" id="PF01149">
    <property type="entry name" value="Fapy_DNA_glyco"/>
    <property type="match status" value="1"/>
</dbReference>
<dbReference type="Pfam" id="PF06831">
    <property type="entry name" value="H2TH"/>
    <property type="match status" value="1"/>
</dbReference>
<dbReference type="Pfam" id="PF06827">
    <property type="entry name" value="zf-FPG_IleRS"/>
    <property type="match status" value="1"/>
</dbReference>
<dbReference type="SMART" id="SM00898">
    <property type="entry name" value="Fapy_DNA_glyco"/>
    <property type="match status" value="1"/>
</dbReference>
<dbReference type="SMART" id="SM01232">
    <property type="entry name" value="H2TH"/>
    <property type="match status" value="1"/>
</dbReference>
<dbReference type="SUPFAM" id="SSF57716">
    <property type="entry name" value="Glucocorticoid receptor-like (DNA-binding domain)"/>
    <property type="match status" value="1"/>
</dbReference>
<dbReference type="SUPFAM" id="SSF81624">
    <property type="entry name" value="N-terminal domain of MutM-like DNA repair proteins"/>
    <property type="match status" value="1"/>
</dbReference>
<dbReference type="SUPFAM" id="SSF46946">
    <property type="entry name" value="S13-like H2TH domain"/>
    <property type="match status" value="1"/>
</dbReference>
<dbReference type="PROSITE" id="PS51068">
    <property type="entry name" value="FPG_CAT"/>
    <property type="match status" value="1"/>
</dbReference>
<dbReference type="PROSITE" id="PS01242">
    <property type="entry name" value="ZF_FPG_1"/>
    <property type="match status" value="1"/>
</dbReference>
<dbReference type="PROSITE" id="PS51066">
    <property type="entry name" value="ZF_FPG_2"/>
    <property type="match status" value="1"/>
</dbReference>
<protein>
    <recommendedName>
        <fullName evidence="2">Formamidopyrimidine-DNA glycosylase</fullName>
        <shortName evidence="2">Fapy-DNA glycosylase</shortName>
        <ecNumber evidence="2">3.2.2.23</ecNumber>
    </recommendedName>
    <alternativeName>
        <fullName evidence="2">DNA-(apurinic or apyrimidinic site) lyase MutM</fullName>
        <shortName evidence="2">AP lyase MutM</shortName>
        <ecNumber evidence="2">4.2.99.18</ecNumber>
    </alternativeName>
</protein>